<evidence type="ECO:0000255" key="1">
    <source>
        <dbReference type="HAMAP-Rule" id="MF_00045"/>
    </source>
</evidence>
<organism>
    <name type="scientific">Corynebacterium efficiens (strain DSM 44549 / YS-314 / AJ 12310 / JCM 11189 / NBRC 100395)</name>
    <dbReference type="NCBI Taxonomy" id="196164"/>
    <lineage>
        <taxon>Bacteria</taxon>
        <taxon>Bacillati</taxon>
        <taxon>Actinomycetota</taxon>
        <taxon>Actinomycetes</taxon>
        <taxon>Mycobacteriales</taxon>
        <taxon>Corynebacteriaceae</taxon>
        <taxon>Corynebacterium</taxon>
    </lineage>
</organism>
<gene>
    <name evidence="1" type="primary">orn</name>
    <name type="ordered locus">CE2370</name>
</gene>
<name>ORN_COREF</name>
<sequence length="221" mass="24531">MSETVGNGENFPAVAARDDRLVWVDLEMTGLDLERHVIVEVAALVTDANLNILGEGVDLVVHATDEELARMDDFVTRMHDSSGLTPLIRASTVSLKDAEDAVLALIEEHCDPAHPAPLAGNSIATDRAFIREQMPRLDAALHYRMVDVSSVKELARRWCPRVYYKQPTKGLAHRALADIVESIRELDYYRRSFFVADPGPTSAQCEADAETSVARFAHYLE</sequence>
<feature type="chain" id="PRO_0000111030" description="Oligoribonuclease">
    <location>
        <begin position="1"/>
        <end position="221"/>
    </location>
</feature>
<feature type="domain" description="Exonuclease" evidence="1">
    <location>
        <begin position="21"/>
        <end position="186"/>
    </location>
</feature>
<feature type="active site" evidence="1">
    <location>
        <position position="143"/>
    </location>
</feature>
<reference key="1">
    <citation type="journal article" date="2003" name="Genome Res.">
        <title>Comparative complete genome sequence analysis of the amino acid replacements responsible for the thermostability of Corynebacterium efficiens.</title>
        <authorList>
            <person name="Nishio Y."/>
            <person name="Nakamura Y."/>
            <person name="Kawarabayasi Y."/>
            <person name="Usuda Y."/>
            <person name="Kimura E."/>
            <person name="Sugimoto S."/>
            <person name="Matsui K."/>
            <person name="Yamagishi A."/>
            <person name="Kikuchi H."/>
            <person name="Ikeo K."/>
            <person name="Gojobori T."/>
        </authorList>
    </citation>
    <scope>NUCLEOTIDE SEQUENCE [LARGE SCALE GENOMIC DNA]</scope>
    <source>
        <strain>DSM 44549 / YS-314 / AJ 12310 / JCM 11189 / NBRC 100395</strain>
    </source>
</reference>
<keyword id="KW-0963">Cytoplasm</keyword>
<keyword id="KW-0269">Exonuclease</keyword>
<keyword id="KW-0378">Hydrolase</keyword>
<keyword id="KW-0540">Nuclease</keyword>
<keyword id="KW-1185">Reference proteome</keyword>
<accession>Q8FMX9</accession>
<dbReference type="EC" id="3.1.15.-" evidence="1"/>
<dbReference type="EMBL" id="BA000035">
    <property type="protein sequence ID" value="BAC19180.1"/>
    <property type="molecule type" value="Genomic_DNA"/>
</dbReference>
<dbReference type="RefSeq" id="WP_006768376.1">
    <property type="nucleotide sequence ID" value="NC_004369.1"/>
</dbReference>
<dbReference type="SMR" id="Q8FMX9"/>
<dbReference type="STRING" id="196164.gene:10742805"/>
<dbReference type="KEGG" id="cef:CE2370"/>
<dbReference type="eggNOG" id="COG1949">
    <property type="taxonomic scope" value="Bacteria"/>
</dbReference>
<dbReference type="HOGENOM" id="CLU_064761_3_0_11"/>
<dbReference type="OrthoDB" id="9801329at2"/>
<dbReference type="Proteomes" id="UP000001409">
    <property type="component" value="Chromosome"/>
</dbReference>
<dbReference type="GO" id="GO:0005737">
    <property type="term" value="C:cytoplasm"/>
    <property type="evidence" value="ECO:0007669"/>
    <property type="project" value="UniProtKB-SubCell"/>
</dbReference>
<dbReference type="GO" id="GO:0000175">
    <property type="term" value="F:3'-5'-RNA exonuclease activity"/>
    <property type="evidence" value="ECO:0007669"/>
    <property type="project" value="InterPro"/>
</dbReference>
<dbReference type="GO" id="GO:0003676">
    <property type="term" value="F:nucleic acid binding"/>
    <property type="evidence" value="ECO:0007669"/>
    <property type="project" value="InterPro"/>
</dbReference>
<dbReference type="CDD" id="cd06135">
    <property type="entry name" value="Orn"/>
    <property type="match status" value="1"/>
</dbReference>
<dbReference type="FunFam" id="3.30.420.10:FF:000003">
    <property type="entry name" value="Oligoribonuclease"/>
    <property type="match status" value="1"/>
</dbReference>
<dbReference type="Gene3D" id="3.30.420.10">
    <property type="entry name" value="Ribonuclease H-like superfamily/Ribonuclease H"/>
    <property type="match status" value="1"/>
</dbReference>
<dbReference type="HAMAP" id="MF_00045">
    <property type="entry name" value="Oligoribonuclease"/>
    <property type="match status" value="1"/>
</dbReference>
<dbReference type="InterPro" id="IPR013520">
    <property type="entry name" value="Exonuclease_RNaseT/DNA_pol3"/>
</dbReference>
<dbReference type="InterPro" id="IPR022894">
    <property type="entry name" value="Oligoribonuclease"/>
</dbReference>
<dbReference type="InterPro" id="IPR012337">
    <property type="entry name" value="RNaseH-like_sf"/>
</dbReference>
<dbReference type="InterPro" id="IPR036397">
    <property type="entry name" value="RNaseH_sf"/>
</dbReference>
<dbReference type="NCBIfam" id="NF003765">
    <property type="entry name" value="PRK05359.1"/>
    <property type="match status" value="1"/>
</dbReference>
<dbReference type="PANTHER" id="PTHR11046">
    <property type="entry name" value="OLIGORIBONUCLEASE, MITOCHONDRIAL"/>
    <property type="match status" value="1"/>
</dbReference>
<dbReference type="PANTHER" id="PTHR11046:SF0">
    <property type="entry name" value="OLIGORIBONUCLEASE, MITOCHONDRIAL"/>
    <property type="match status" value="1"/>
</dbReference>
<dbReference type="Pfam" id="PF00929">
    <property type="entry name" value="RNase_T"/>
    <property type="match status" value="1"/>
</dbReference>
<dbReference type="SMART" id="SM00479">
    <property type="entry name" value="EXOIII"/>
    <property type="match status" value="1"/>
</dbReference>
<dbReference type="SUPFAM" id="SSF53098">
    <property type="entry name" value="Ribonuclease H-like"/>
    <property type="match status" value="1"/>
</dbReference>
<proteinExistence type="inferred from homology"/>
<protein>
    <recommendedName>
        <fullName evidence="1">Oligoribonuclease</fullName>
        <ecNumber evidence="1">3.1.15.-</ecNumber>
    </recommendedName>
</protein>
<comment type="function">
    <text evidence="1">3'-to-5' exoribonuclease specific for small oligoribonucleotides.</text>
</comment>
<comment type="subcellular location">
    <subcellularLocation>
        <location evidence="1">Cytoplasm</location>
    </subcellularLocation>
</comment>
<comment type="similarity">
    <text evidence="1">Belongs to the oligoribonuclease family.</text>
</comment>